<comment type="catalytic activity">
    <reaction evidence="1">
        <text>(S)-4-amino-5-oxopentanoate = 5-aminolevulinate</text>
        <dbReference type="Rhea" id="RHEA:14265"/>
        <dbReference type="ChEBI" id="CHEBI:57501"/>
        <dbReference type="ChEBI" id="CHEBI:356416"/>
        <dbReference type="EC" id="5.4.3.8"/>
    </reaction>
</comment>
<comment type="cofactor">
    <cofactor evidence="1">
        <name>pyridoxal 5'-phosphate</name>
        <dbReference type="ChEBI" id="CHEBI:597326"/>
    </cofactor>
</comment>
<comment type="pathway">
    <text evidence="1">Porphyrin-containing compound metabolism; protoporphyrin-IX biosynthesis; 5-aminolevulinate from L-glutamyl-tRNA(Glu): step 2/2.</text>
</comment>
<comment type="pathway">
    <text evidence="1">Porphyrin-containing compound metabolism; chlorophyll biosynthesis.</text>
</comment>
<comment type="subunit">
    <text evidence="1">Homodimer.</text>
</comment>
<comment type="subcellular location">
    <subcellularLocation>
        <location evidence="1">Cytoplasm</location>
    </subcellularLocation>
</comment>
<comment type="similarity">
    <text evidence="1">Belongs to the class-III pyridoxal-phosphate-dependent aminotransferase family. HemL subfamily.</text>
</comment>
<evidence type="ECO:0000255" key="1">
    <source>
        <dbReference type="HAMAP-Rule" id="MF_00375"/>
    </source>
</evidence>
<name>GSA_PARMW</name>
<keyword id="KW-0149">Chlorophyll biosynthesis</keyword>
<keyword id="KW-0963">Cytoplasm</keyword>
<keyword id="KW-0413">Isomerase</keyword>
<keyword id="KW-0627">Porphyrin biosynthesis</keyword>
<keyword id="KW-0663">Pyridoxal phosphate</keyword>
<feature type="chain" id="PRO_0000243632" description="Glutamate-1-semialdehyde 2,1-aminomutase">
    <location>
        <begin position="1"/>
        <end position="428"/>
    </location>
</feature>
<feature type="modified residue" description="N6-(pyridoxal phosphate)lysine" evidence="1">
    <location>
        <position position="267"/>
    </location>
</feature>
<sequence>MNTSRSQAIFGAAQGLMPGGVSSPVRAFKSVGGQPIVFDRVKGPYAWDVDGNKYIDYIGSWGPAICGHAHPEVISALQEAIEKGTSFGAPCALENTLAEMVIDAVPSVEMVRFVNSGTEACMAVLRLMRAFTGRDKVIKFEGCYHGHADMFLVKAGSGVATLGLPDSPGVPRSTTANTLTAPYNDLEAVKALFAENPDAIAGVILEPIVGNAGFIQPEPGFLEGLRELTKEHGALLVFDEVMTGFRISYGGAQAHFGVTPDLTTMGKVIGGGLPVGAYGGRADIMGMVAPAGPMYQAGTLSGNPLAMTAGIKTLELLKQPGSYEKLTATTEKLIAGIKEAATAAGLPFTGGSVSAMFGFFLCEGPVRNFEDAKATDSERFGKLHRAMLERGVYLAPSAFEAGFTSLAHSEADIEATVNAFRESFAEVA</sequence>
<protein>
    <recommendedName>
        <fullName evidence="1">Glutamate-1-semialdehyde 2,1-aminomutase</fullName>
        <shortName evidence="1">GSA</shortName>
        <ecNumber evidence="1">5.4.3.8</ecNumber>
    </recommendedName>
    <alternativeName>
        <fullName evidence="1">Glutamate-1-semialdehyde aminotransferase</fullName>
        <shortName evidence="1">GSA-AT</shortName>
    </alternativeName>
</protein>
<reference key="1">
    <citation type="journal article" date="2003" name="Nature">
        <title>The genome of a motile marine Synechococcus.</title>
        <authorList>
            <person name="Palenik B."/>
            <person name="Brahamsha B."/>
            <person name="Larimer F.W."/>
            <person name="Land M.L."/>
            <person name="Hauser L."/>
            <person name="Chain P."/>
            <person name="Lamerdin J.E."/>
            <person name="Regala W."/>
            <person name="Allen E.E."/>
            <person name="McCarren J."/>
            <person name="Paulsen I.T."/>
            <person name="Dufresne A."/>
            <person name="Partensky F."/>
            <person name="Webb E.A."/>
            <person name="Waterbury J."/>
        </authorList>
    </citation>
    <scope>NUCLEOTIDE SEQUENCE [LARGE SCALE GENOMIC DNA]</scope>
    <source>
        <strain>WH8102</strain>
    </source>
</reference>
<gene>
    <name evidence="1" type="primary">hemL</name>
    <name type="ordered locus">SYNW1809</name>
</gene>
<proteinExistence type="inferred from homology"/>
<dbReference type="EC" id="5.4.3.8" evidence="1"/>
<dbReference type="EMBL" id="BX569693">
    <property type="protein sequence ID" value="CAE08324.1"/>
    <property type="molecule type" value="Genomic_DNA"/>
</dbReference>
<dbReference type="SMR" id="Q7U598"/>
<dbReference type="STRING" id="84588.SYNW1809"/>
<dbReference type="KEGG" id="syw:SYNW1809"/>
<dbReference type="eggNOG" id="COG0001">
    <property type="taxonomic scope" value="Bacteria"/>
</dbReference>
<dbReference type="HOGENOM" id="CLU_016922_1_5_3"/>
<dbReference type="UniPathway" id="UPA00251">
    <property type="reaction ID" value="UER00317"/>
</dbReference>
<dbReference type="UniPathway" id="UPA00668"/>
<dbReference type="Proteomes" id="UP000001422">
    <property type="component" value="Chromosome"/>
</dbReference>
<dbReference type="GO" id="GO:0005737">
    <property type="term" value="C:cytoplasm"/>
    <property type="evidence" value="ECO:0007669"/>
    <property type="project" value="UniProtKB-SubCell"/>
</dbReference>
<dbReference type="GO" id="GO:0042286">
    <property type="term" value="F:glutamate-1-semialdehyde 2,1-aminomutase activity"/>
    <property type="evidence" value="ECO:0007669"/>
    <property type="project" value="UniProtKB-UniRule"/>
</dbReference>
<dbReference type="GO" id="GO:0030170">
    <property type="term" value="F:pyridoxal phosphate binding"/>
    <property type="evidence" value="ECO:0007669"/>
    <property type="project" value="InterPro"/>
</dbReference>
<dbReference type="GO" id="GO:0008483">
    <property type="term" value="F:transaminase activity"/>
    <property type="evidence" value="ECO:0007669"/>
    <property type="project" value="InterPro"/>
</dbReference>
<dbReference type="GO" id="GO:0015995">
    <property type="term" value="P:chlorophyll biosynthetic process"/>
    <property type="evidence" value="ECO:0007669"/>
    <property type="project" value="UniProtKB-UniRule"/>
</dbReference>
<dbReference type="GO" id="GO:0006782">
    <property type="term" value="P:protoporphyrinogen IX biosynthetic process"/>
    <property type="evidence" value="ECO:0007669"/>
    <property type="project" value="UniProtKB-UniRule"/>
</dbReference>
<dbReference type="CDD" id="cd00610">
    <property type="entry name" value="OAT_like"/>
    <property type="match status" value="1"/>
</dbReference>
<dbReference type="FunFam" id="3.40.640.10:FF:000021">
    <property type="entry name" value="Glutamate-1-semialdehyde 2,1-aminomutase"/>
    <property type="match status" value="1"/>
</dbReference>
<dbReference type="Gene3D" id="3.90.1150.10">
    <property type="entry name" value="Aspartate Aminotransferase, domain 1"/>
    <property type="match status" value="1"/>
</dbReference>
<dbReference type="Gene3D" id="3.40.640.10">
    <property type="entry name" value="Type I PLP-dependent aspartate aminotransferase-like (Major domain)"/>
    <property type="match status" value="1"/>
</dbReference>
<dbReference type="HAMAP" id="MF_00375">
    <property type="entry name" value="HemL_aminotrans_3"/>
    <property type="match status" value="1"/>
</dbReference>
<dbReference type="InterPro" id="IPR004639">
    <property type="entry name" value="4pyrrol_synth_GluAld_NH2Trfase"/>
</dbReference>
<dbReference type="InterPro" id="IPR005814">
    <property type="entry name" value="Aminotrans_3"/>
</dbReference>
<dbReference type="InterPro" id="IPR049704">
    <property type="entry name" value="Aminotrans_3_PPA_site"/>
</dbReference>
<dbReference type="InterPro" id="IPR015424">
    <property type="entry name" value="PyrdxlP-dep_Trfase"/>
</dbReference>
<dbReference type="InterPro" id="IPR015421">
    <property type="entry name" value="PyrdxlP-dep_Trfase_major"/>
</dbReference>
<dbReference type="InterPro" id="IPR015422">
    <property type="entry name" value="PyrdxlP-dep_Trfase_small"/>
</dbReference>
<dbReference type="NCBIfam" id="TIGR00713">
    <property type="entry name" value="hemL"/>
    <property type="match status" value="1"/>
</dbReference>
<dbReference type="NCBIfam" id="NF000818">
    <property type="entry name" value="PRK00062.1"/>
    <property type="match status" value="1"/>
</dbReference>
<dbReference type="PANTHER" id="PTHR43713">
    <property type="entry name" value="GLUTAMATE-1-SEMIALDEHYDE 2,1-AMINOMUTASE"/>
    <property type="match status" value="1"/>
</dbReference>
<dbReference type="PANTHER" id="PTHR43713:SF3">
    <property type="entry name" value="GLUTAMATE-1-SEMIALDEHYDE 2,1-AMINOMUTASE 1, CHLOROPLASTIC-RELATED"/>
    <property type="match status" value="1"/>
</dbReference>
<dbReference type="Pfam" id="PF00202">
    <property type="entry name" value="Aminotran_3"/>
    <property type="match status" value="1"/>
</dbReference>
<dbReference type="SUPFAM" id="SSF53383">
    <property type="entry name" value="PLP-dependent transferases"/>
    <property type="match status" value="1"/>
</dbReference>
<dbReference type="PROSITE" id="PS00600">
    <property type="entry name" value="AA_TRANSFER_CLASS_3"/>
    <property type="match status" value="1"/>
</dbReference>
<accession>Q7U598</accession>
<organism>
    <name type="scientific">Parasynechococcus marenigrum (strain WH8102)</name>
    <dbReference type="NCBI Taxonomy" id="84588"/>
    <lineage>
        <taxon>Bacteria</taxon>
        <taxon>Bacillati</taxon>
        <taxon>Cyanobacteriota</taxon>
        <taxon>Cyanophyceae</taxon>
        <taxon>Synechococcales</taxon>
        <taxon>Prochlorococcaceae</taxon>
        <taxon>Parasynechococcus</taxon>
        <taxon>Parasynechococcus marenigrum</taxon>
    </lineage>
</organism>